<sequence>MMGFGASALESIEGEEALEVPGPPPEPRAPEPRAPEPEPGLDLSLSPSPLPESPKARKSSPGQRKGRRGGSRRGRQVRFQLAPPSPVRSEPLLVAGAPGDDHELEAPALQSSLALSLELQNARAAVASGQFDASKAVEEQLRKSFRTRCALEETVAEGLNVPRSKRLYRDLVSLQVPEEQVLNAALREKLAMLPPQPRAPPLKEVLGPGPDMTMLCNPDSLWSESPHLTVDGLPPLRLQARPRPSEDTFLMHRMLRRWEA</sequence>
<dbReference type="EMBL" id="AY823670">
    <property type="protein sequence ID" value="AAX39498.1"/>
    <property type="molecule type" value="Genomic_DNA"/>
</dbReference>
<dbReference type="EMBL" id="AK008148">
    <property type="protein sequence ID" value="BAB25495.1"/>
    <property type="molecule type" value="mRNA"/>
</dbReference>
<dbReference type="EMBL" id="AC125063">
    <property type="status" value="NOT_ANNOTATED_CDS"/>
    <property type="molecule type" value="Genomic_DNA"/>
</dbReference>
<dbReference type="EMBL" id="BC052497">
    <property type="protein sequence ID" value="AAH52497.1"/>
    <property type="molecule type" value="mRNA"/>
</dbReference>
<dbReference type="CCDS" id="CCDS19777.1"/>
<dbReference type="RefSeq" id="NP_081518.1">
    <property type="nucleotide sequence ID" value="NM_027242.5"/>
</dbReference>
<dbReference type="SMR" id="Q9D8C8"/>
<dbReference type="BioGRID" id="213727">
    <property type="interactions" value="2"/>
</dbReference>
<dbReference type="FunCoup" id="Q9D8C8">
    <property type="interactions" value="179"/>
</dbReference>
<dbReference type="STRING" id="10090.ENSMUSP00000031739"/>
<dbReference type="iPTMnet" id="Q9D8C8"/>
<dbReference type="PhosphoSitePlus" id="Q9D8C8"/>
<dbReference type="jPOST" id="Q9D8C8"/>
<dbReference type="PaxDb" id="10090-ENSMUSP00000031739"/>
<dbReference type="PeptideAtlas" id="Q9D8C8"/>
<dbReference type="ProteomicsDB" id="289386"/>
<dbReference type="Pumba" id="Q9D8C8"/>
<dbReference type="Antibodypedia" id="55003">
    <property type="antibodies" value="70 antibodies from 15 providers"/>
</dbReference>
<dbReference type="Ensembl" id="ENSMUST00000031739.6">
    <property type="protein sequence ID" value="ENSMUSP00000031739.5"/>
    <property type="gene ID" value="ENSMUSG00000029725.11"/>
</dbReference>
<dbReference type="GeneID" id="69871"/>
<dbReference type="KEGG" id="mmu:69871"/>
<dbReference type="UCSC" id="uc009adx.1">
    <property type="organism name" value="mouse"/>
</dbReference>
<dbReference type="AGR" id="MGI:1922853"/>
<dbReference type="CTD" id="221908"/>
<dbReference type="MGI" id="MGI:1922853">
    <property type="gene designation" value="Ppp1r35"/>
</dbReference>
<dbReference type="VEuPathDB" id="HostDB:ENSMUSG00000029725"/>
<dbReference type="eggNOG" id="ENOG502S5MS">
    <property type="taxonomic scope" value="Eukaryota"/>
</dbReference>
<dbReference type="GeneTree" id="ENSGT00390000004198"/>
<dbReference type="HOGENOM" id="CLU_096528_0_0_1"/>
<dbReference type="InParanoid" id="Q9D8C8"/>
<dbReference type="OMA" id="MMGCEEP"/>
<dbReference type="OrthoDB" id="8942190at2759"/>
<dbReference type="PhylomeDB" id="Q9D8C8"/>
<dbReference type="TreeFam" id="TF337101"/>
<dbReference type="BioGRID-ORCS" id="69871">
    <property type="hits" value="7 hits in 81 CRISPR screens"/>
</dbReference>
<dbReference type="ChiTaRS" id="Ppp1r35">
    <property type="organism name" value="mouse"/>
</dbReference>
<dbReference type="PRO" id="PR:Q9D8C8"/>
<dbReference type="Proteomes" id="UP000000589">
    <property type="component" value="Chromosome 5"/>
</dbReference>
<dbReference type="RNAct" id="Q9D8C8">
    <property type="molecule type" value="protein"/>
</dbReference>
<dbReference type="Bgee" id="ENSMUSG00000029725">
    <property type="expression patterns" value="Expressed in spermatocyte and 149 other cell types or tissues"/>
</dbReference>
<dbReference type="ExpressionAtlas" id="Q9D8C8">
    <property type="expression patterns" value="baseline and differential"/>
</dbReference>
<dbReference type="GO" id="GO:0005814">
    <property type="term" value="C:centriole"/>
    <property type="evidence" value="ECO:0000250"/>
    <property type="project" value="UniProtKB"/>
</dbReference>
<dbReference type="GO" id="GO:0005813">
    <property type="term" value="C:centrosome"/>
    <property type="evidence" value="ECO:0000250"/>
    <property type="project" value="UniProtKB"/>
</dbReference>
<dbReference type="GO" id="GO:0005737">
    <property type="term" value="C:cytoplasm"/>
    <property type="evidence" value="ECO:0007669"/>
    <property type="project" value="UniProtKB-KW"/>
</dbReference>
<dbReference type="GO" id="GO:0019902">
    <property type="term" value="F:phosphatase binding"/>
    <property type="evidence" value="ECO:0007669"/>
    <property type="project" value="InterPro"/>
</dbReference>
<dbReference type="GO" id="GO:0004864">
    <property type="term" value="F:protein phosphatase inhibitor activity"/>
    <property type="evidence" value="ECO:0007669"/>
    <property type="project" value="UniProtKB-KW"/>
</dbReference>
<dbReference type="GO" id="GO:0048570">
    <property type="term" value="P:notochord morphogenesis"/>
    <property type="evidence" value="ECO:0000315"/>
    <property type="project" value="UniProtKB"/>
</dbReference>
<dbReference type="GO" id="GO:1903724">
    <property type="term" value="P:positive regulation of centriole elongation"/>
    <property type="evidence" value="ECO:0000250"/>
    <property type="project" value="UniProtKB"/>
</dbReference>
<dbReference type="GO" id="GO:0045724">
    <property type="term" value="P:positive regulation of cilium assembly"/>
    <property type="evidence" value="ECO:0000315"/>
    <property type="project" value="UniProtKB"/>
</dbReference>
<dbReference type="InterPro" id="IPR033590">
    <property type="entry name" value="PPP1R35"/>
</dbReference>
<dbReference type="InterPro" id="IPR029135">
    <property type="entry name" value="PPP1R35_C"/>
</dbReference>
<dbReference type="PANTHER" id="PTHR28625">
    <property type="entry name" value="PROTEIN PHOSPHATASE 1 REGULATORY SUBUNIT 35"/>
    <property type="match status" value="1"/>
</dbReference>
<dbReference type="PANTHER" id="PTHR28625:SF1">
    <property type="entry name" value="PROTEIN PHOSPHATASE 1 REGULATORY SUBUNIT 35"/>
    <property type="match status" value="1"/>
</dbReference>
<dbReference type="Pfam" id="PF15503">
    <property type="entry name" value="PPP1R35_C"/>
    <property type="match status" value="1"/>
</dbReference>
<feature type="chain" id="PRO_0000358929" description="Protein phosphatase 1 regulatory subunit 35">
    <location>
        <begin position="1"/>
        <end position="260"/>
    </location>
</feature>
<feature type="region of interest" description="Disordered" evidence="2">
    <location>
        <begin position="1"/>
        <end position="100"/>
    </location>
</feature>
<feature type="compositionally biased region" description="Basic residues" evidence="2">
    <location>
        <begin position="64"/>
        <end position="76"/>
    </location>
</feature>
<feature type="modified residue" description="Phosphoserine" evidence="6">
    <location>
        <position position="46"/>
    </location>
</feature>
<feature type="modified residue" description="Phosphoserine" evidence="6">
    <location>
        <position position="53"/>
    </location>
</feature>
<name>PPR35_MOUSE</name>
<reference key="1">
    <citation type="journal article" date="2006" name="Physiol. Genomics">
        <title>Comparative analysis of the paired immunoglobulin-like receptor (PILR) locus in six mammalian genomes: duplication, conversion, and the birth of new genes.</title>
        <authorList>
            <person name="Wilson M.D."/>
            <person name="Cheung J."/>
            <person name="Martindale D.W."/>
            <person name="Scherer S.W."/>
            <person name="Koop B.F."/>
        </authorList>
    </citation>
    <scope>NUCLEOTIDE SEQUENCE [GENOMIC DNA]</scope>
    <source>
        <strain>129/Sv</strain>
    </source>
</reference>
<reference key="2">
    <citation type="journal article" date="2005" name="Science">
        <title>The transcriptional landscape of the mammalian genome.</title>
        <authorList>
            <person name="Carninci P."/>
            <person name="Kasukawa T."/>
            <person name="Katayama S."/>
            <person name="Gough J."/>
            <person name="Frith M.C."/>
            <person name="Maeda N."/>
            <person name="Oyama R."/>
            <person name="Ravasi T."/>
            <person name="Lenhard B."/>
            <person name="Wells C."/>
            <person name="Kodzius R."/>
            <person name="Shimokawa K."/>
            <person name="Bajic V.B."/>
            <person name="Brenner S.E."/>
            <person name="Batalov S."/>
            <person name="Forrest A.R."/>
            <person name="Zavolan M."/>
            <person name="Davis M.J."/>
            <person name="Wilming L.G."/>
            <person name="Aidinis V."/>
            <person name="Allen J.E."/>
            <person name="Ambesi-Impiombato A."/>
            <person name="Apweiler R."/>
            <person name="Aturaliya R.N."/>
            <person name="Bailey T.L."/>
            <person name="Bansal M."/>
            <person name="Baxter L."/>
            <person name="Beisel K.W."/>
            <person name="Bersano T."/>
            <person name="Bono H."/>
            <person name="Chalk A.M."/>
            <person name="Chiu K.P."/>
            <person name="Choudhary V."/>
            <person name="Christoffels A."/>
            <person name="Clutterbuck D.R."/>
            <person name="Crowe M.L."/>
            <person name="Dalla E."/>
            <person name="Dalrymple B.P."/>
            <person name="de Bono B."/>
            <person name="Della Gatta G."/>
            <person name="di Bernardo D."/>
            <person name="Down T."/>
            <person name="Engstrom P."/>
            <person name="Fagiolini M."/>
            <person name="Faulkner G."/>
            <person name="Fletcher C.F."/>
            <person name="Fukushima T."/>
            <person name="Furuno M."/>
            <person name="Futaki S."/>
            <person name="Gariboldi M."/>
            <person name="Georgii-Hemming P."/>
            <person name="Gingeras T.R."/>
            <person name="Gojobori T."/>
            <person name="Green R.E."/>
            <person name="Gustincich S."/>
            <person name="Harbers M."/>
            <person name="Hayashi Y."/>
            <person name="Hensch T.K."/>
            <person name="Hirokawa N."/>
            <person name="Hill D."/>
            <person name="Huminiecki L."/>
            <person name="Iacono M."/>
            <person name="Ikeo K."/>
            <person name="Iwama A."/>
            <person name="Ishikawa T."/>
            <person name="Jakt M."/>
            <person name="Kanapin A."/>
            <person name="Katoh M."/>
            <person name="Kawasawa Y."/>
            <person name="Kelso J."/>
            <person name="Kitamura H."/>
            <person name="Kitano H."/>
            <person name="Kollias G."/>
            <person name="Krishnan S.P."/>
            <person name="Kruger A."/>
            <person name="Kummerfeld S.K."/>
            <person name="Kurochkin I.V."/>
            <person name="Lareau L.F."/>
            <person name="Lazarevic D."/>
            <person name="Lipovich L."/>
            <person name="Liu J."/>
            <person name="Liuni S."/>
            <person name="McWilliam S."/>
            <person name="Madan Babu M."/>
            <person name="Madera M."/>
            <person name="Marchionni L."/>
            <person name="Matsuda H."/>
            <person name="Matsuzawa S."/>
            <person name="Miki H."/>
            <person name="Mignone F."/>
            <person name="Miyake S."/>
            <person name="Morris K."/>
            <person name="Mottagui-Tabar S."/>
            <person name="Mulder N."/>
            <person name="Nakano N."/>
            <person name="Nakauchi H."/>
            <person name="Ng P."/>
            <person name="Nilsson R."/>
            <person name="Nishiguchi S."/>
            <person name="Nishikawa S."/>
            <person name="Nori F."/>
            <person name="Ohara O."/>
            <person name="Okazaki Y."/>
            <person name="Orlando V."/>
            <person name="Pang K.C."/>
            <person name="Pavan W.J."/>
            <person name="Pavesi G."/>
            <person name="Pesole G."/>
            <person name="Petrovsky N."/>
            <person name="Piazza S."/>
            <person name="Reed J."/>
            <person name="Reid J.F."/>
            <person name="Ring B.Z."/>
            <person name="Ringwald M."/>
            <person name="Rost B."/>
            <person name="Ruan Y."/>
            <person name="Salzberg S.L."/>
            <person name="Sandelin A."/>
            <person name="Schneider C."/>
            <person name="Schoenbach C."/>
            <person name="Sekiguchi K."/>
            <person name="Semple C.A."/>
            <person name="Seno S."/>
            <person name="Sessa L."/>
            <person name="Sheng Y."/>
            <person name="Shibata Y."/>
            <person name="Shimada H."/>
            <person name="Shimada K."/>
            <person name="Silva D."/>
            <person name="Sinclair B."/>
            <person name="Sperling S."/>
            <person name="Stupka E."/>
            <person name="Sugiura K."/>
            <person name="Sultana R."/>
            <person name="Takenaka Y."/>
            <person name="Taki K."/>
            <person name="Tammoja K."/>
            <person name="Tan S.L."/>
            <person name="Tang S."/>
            <person name="Taylor M.S."/>
            <person name="Tegner J."/>
            <person name="Teichmann S.A."/>
            <person name="Ueda H.R."/>
            <person name="van Nimwegen E."/>
            <person name="Verardo R."/>
            <person name="Wei C.L."/>
            <person name="Yagi K."/>
            <person name="Yamanishi H."/>
            <person name="Zabarovsky E."/>
            <person name="Zhu S."/>
            <person name="Zimmer A."/>
            <person name="Hide W."/>
            <person name="Bult C."/>
            <person name="Grimmond S.M."/>
            <person name="Teasdale R.D."/>
            <person name="Liu E.T."/>
            <person name="Brusic V."/>
            <person name="Quackenbush J."/>
            <person name="Wahlestedt C."/>
            <person name="Mattick J.S."/>
            <person name="Hume D.A."/>
            <person name="Kai C."/>
            <person name="Sasaki D."/>
            <person name="Tomaru Y."/>
            <person name="Fukuda S."/>
            <person name="Kanamori-Katayama M."/>
            <person name="Suzuki M."/>
            <person name="Aoki J."/>
            <person name="Arakawa T."/>
            <person name="Iida J."/>
            <person name="Imamura K."/>
            <person name="Itoh M."/>
            <person name="Kato T."/>
            <person name="Kawaji H."/>
            <person name="Kawagashira N."/>
            <person name="Kawashima T."/>
            <person name="Kojima M."/>
            <person name="Kondo S."/>
            <person name="Konno H."/>
            <person name="Nakano K."/>
            <person name="Ninomiya N."/>
            <person name="Nishio T."/>
            <person name="Okada M."/>
            <person name="Plessy C."/>
            <person name="Shibata K."/>
            <person name="Shiraki T."/>
            <person name="Suzuki S."/>
            <person name="Tagami M."/>
            <person name="Waki K."/>
            <person name="Watahiki A."/>
            <person name="Okamura-Oho Y."/>
            <person name="Suzuki H."/>
            <person name="Kawai J."/>
            <person name="Hayashizaki Y."/>
        </authorList>
    </citation>
    <scope>NUCLEOTIDE SEQUENCE [LARGE SCALE MRNA]</scope>
    <source>
        <strain>C57BL/6J</strain>
        <tissue>Small intestine</tissue>
    </source>
</reference>
<reference key="3">
    <citation type="journal article" date="2009" name="PLoS Biol.">
        <title>Lineage-specific biology revealed by a finished genome assembly of the mouse.</title>
        <authorList>
            <person name="Church D.M."/>
            <person name="Goodstadt L."/>
            <person name="Hillier L.W."/>
            <person name="Zody M.C."/>
            <person name="Goldstein S."/>
            <person name="She X."/>
            <person name="Bult C.J."/>
            <person name="Agarwala R."/>
            <person name="Cherry J.L."/>
            <person name="DiCuccio M."/>
            <person name="Hlavina W."/>
            <person name="Kapustin Y."/>
            <person name="Meric P."/>
            <person name="Maglott D."/>
            <person name="Birtle Z."/>
            <person name="Marques A.C."/>
            <person name="Graves T."/>
            <person name="Zhou S."/>
            <person name="Teague B."/>
            <person name="Potamousis K."/>
            <person name="Churas C."/>
            <person name="Place M."/>
            <person name="Herschleb J."/>
            <person name="Runnheim R."/>
            <person name="Forrest D."/>
            <person name="Amos-Landgraf J."/>
            <person name="Schwartz D.C."/>
            <person name="Cheng Z."/>
            <person name="Lindblad-Toh K."/>
            <person name="Eichler E.E."/>
            <person name="Ponting C.P."/>
        </authorList>
    </citation>
    <scope>NUCLEOTIDE SEQUENCE [LARGE SCALE GENOMIC DNA]</scope>
    <source>
        <strain>C57BL/6J</strain>
    </source>
</reference>
<reference key="4">
    <citation type="journal article" date="2004" name="Genome Res.">
        <title>The status, quality, and expansion of the NIH full-length cDNA project: the Mammalian Gene Collection (MGC).</title>
        <authorList>
            <consortium name="The MGC Project Team"/>
        </authorList>
    </citation>
    <scope>NUCLEOTIDE SEQUENCE [LARGE SCALE MRNA]</scope>
    <source>
        <strain>C57BL/6J</strain>
        <tissue>Thymus</tissue>
    </source>
</reference>
<reference key="5">
    <citation type="journal article" date="2010" name="Cell">
        <title>A tissue-specific atlas of mouse protein phosphorylation and expression.</title>
        <authorList>
            <person name="Huttlin E.L."/>
            <person name="Jedrychowski M.P."/>
            <person name="Elias J.E."/>
            <person name="Goswami T."/>
            <person name="Rad R."/>
            <person name="Beausoleil S.A."/>
            <person name="Villen J."/>
            <person name="Haas W."/>
            <person name="Sowa M.E."/>
            <person name="Gygi S.P."/>
        </authorList>
    </citation>
    <scope>PHOSPHORYLATION [LARGE SCALE ANALYSIS] AT SER-46 AND SER-53</scope>
    <scope>IDENTIFICATION BY MASS SPECTROMETRY [LARGE SCALE ANALYSIS]</scope>
    <source>
        <tissue>Liver</tissue>
        <tissue>Pancreas</tissue>
        <tissue>Testis</tissue>
    </source>
</reference>
<reference key="6">
    <citation type="journal article" date="2020" name="Dev. Biol.">
        <title>Protein phosphatase 1 regulatory subunit 35 is required for ciliogenesis, notochord morphogenesis, and cell-cycle progression during murine development.</title>
        <authorList>
            <person name="Archambault D."/>
            <person name="Cheong A."/>
            <person name="Iverson E."/>
            <person name="Tremblay K.D."/>
            <person name="Mager J."/>
        </authorList>
    </citation>
    <scope>DISRUPTION PHENOTYPE</scope>
    <scope>DEVELOPMENTAL STAGE</scope>
    <scope>FUNCTION</scope>
</reference>
<comment type="function">
    <text evidence="1 3">During centriole duplication, plays a role in the centriole elongation by promoting the recruitment of the microtubule-binding elongation machinery through its interaction with TTTN, leading to the centriole to centrosome conversion (By similarity). In addition may play a role in the primary cilia assembly (PubMed:32628936).</text>
</comment>
<comment type="subunit">
    <text evidence="1">Interacts with PPP1CA; this interaction mediates the PPP1CA phosphatase activity inhibition. Interacts with RTTN; this interaction allows the mutual recruitment to the centriole.</text>
</comment>
<comment type="subcellular location">
    <subcellularLocation>
        <location evidence="1">Cytoplasm</location>
        <location evidence="1">Cytoskeleton</location>
        <location evidence="1">Microtubule organizing center</location>
        <location evidence="1">Centrosome</location>
    </subcellularLocation>
    <subcellularLocation>
        <location evidence="1">Cytoplasm</location>
        <location evidence="1">Cytoskeleton</location>
        <location evidence="1">Microtubule organizing center</location>
        <location evidence="1">Centrosome</location>
        <location evidence="1">Centriole</location>
    </subcellularLocation>
    <text evidence="1">Recruited to the nascent daughter centriole early in the duplication cycle and localizes to the proximal centriolar lumen just above the cartwheel. Co-localizes with RTTN at the centriole.</text>
</comment>
<comment type="developmental stage">
    <text evidence="3">Expressed throughout much of the embryo at 7.5 dpc, in mesoderm and ectoderm-derived structures at 8.5 dpc, and throughout much of the embryo at 9.5 dpc but is absent in the extra-embryonic visceral endoderm (VE) at all stages.</text>
</comment>
<comment type="disruption phenotype">
    <text evidence="3">Mice homozygous embryos for the Ppp1r35 gene are lethal during early embryogenesis (PubMed:32628936). Homozygous embryos are capable of initiating and completing gastrulation as well as specifying the anterior/posterior and the dorsal/ventral axis, but exhibit a developmental delays which are the result in the failure to progress past 8.5 dpc to 9.0 dpc (PubMed:32628936).</text>
</comment>
<comment type="similarity">
    <text evidence="4">Belongs to the PPP1R35 family.</text>
</comment>
<proteinExistence type="evidence at protein level"/>
<gene>
    <name evidence="5" type="primary">Ppp1r35</name>
</gene>
<protein>
    <recommendedName>
        <fullName evidence="4">Protein phosphatase 1 regulatory subunit 35</fullName>
    </recommendedName>
</protein>
<organism>
    <name type="scientific">Mus musculus</name>
    <name type="common">Mouse</name>
    <dbReference type="NCBI Taxonomy" id="10090"/>
    <lineage>
        <taxon>Eukaryota</taxon>
        <taxon>Metazoa</taxon>
        <taxon>Chordata</taxon>
        <taxon>Craniata</taxon>
        <taxon>Vertebrata</taxon>
        <taxon>Euteleostomi</taxon>
        <taxon>Mammalia</taxon>
        <taxon>Eutheria</taxon>
        <taxon>Euarchontoglires</taxon>
        <taxon>Glires</taxon>
        <taxon>Rodentia</taxon>
        <taxon>Myomorpha</taxon>
        <taxon>Muroidea</taxon>
        <taxon>Muridae</taxon>
        <taxon>Murinae</taxon>
        <taxon>Mus</taxon>
        <taxon>Mus</taxon>
    </lineage>
</organism>
<keyword id="KW-0963">Cytoplasm</keyword>
<keyword id="KW-0206">Cytoskeleton</keyword>
<keyword id="KW-0597">Phosphoprotein</keyword>
<keyword id="KW-0650">Protein phosphatase inhibitor</keyword>
<keyword id="KW-1185">Reference proteome</keyword>
<evidence type="ECO:0000250" key="1">
    <source>
        <dbReference type="UniProtKB" id="Q8TAP8"/>
    </source>
</evidence>
<evidence type="ECO:0000256" key="2">
    <source>
        <dbReference type="SAM" id="MobiDB-lite"/>
    </source>
</evidence>
<evidence type="ECO:0000269" key="3">
    <source>
    </source>
</evidence>
<evidence type="ECO:0000305" key="4"/>
<evidence type="ECO:0000312" key="5">
    <source>
        <dbReference type="MGI" id="MGI:1922853"/>
    </source>
</evidence>
<evidence type="ECO:0007744" key="6">
    <source>
    </source>
</evidence>
<accession>Q9D8C8</accession>